<feature type="chain" id="PRO_1000092229" description="Sulfate adenylyltransferase subunit 2">
    <location>
        <begin position="1"/>
        <end position="302"/>
    </location>
</feature>
<feature type="region of interest" description="Disordered" evidence="2">
    <location>
        <begin position="279"/>
        <end position="302"/>
    </location>
</feature>
<feature type="compositionally biased region" description="Basic and acidic residues" evidence="2">
    <location>
        <begin position="280"/>
        <end position="302"/>
    </location>
</feature>
<comment type="function">
    <text evidence="1">With CysN forms the ATP sulfurylase (ATPS) that catalyzes the adenylation of sulfate producing adenosine 5'-phosphosulfate (APS) and diphosphate, the first enzymatic step in sulfur assimilation pathway. APS synthesis involves the formation of a high-energy phosphoric-sulfuric acid anhydride bond driven by GTP hydrolysis by CysN coupled to ATP hydrolysis by CysD.</text>
</comment>
<comment type="catalytic activity">
    <reaction evidence="1">
        <text>sulfate + ATP + H(+) = adenosine 5'-phosphosulfate + diphosphate</text>
        <dbReference type="Rhea" id="RHEA:18133"/>
        <dbReference type="ChEBI" id="CHEBI:15378"/>
        <dbReference type="ChEBI" id="CHEBI:16189"/>
        <dbReference type="ChEBI" id="CHEBI:30616"/>
        <dbReference type="ChEBI" id="CHEBI:33019"/>
        <dbReference type="ChEBI" id="CHEBI:58243"/>
        <dbReference type="EC" id="2.7.7.4"/>
    </reaction>
</comment>
<comment type="pathway">
    <text evidence="1">Sulfur metabolism; hydrogen sulfide biosynthesis; sulfite from sulfate: step 1/3.</text>
</comment>
<comment type="subunit">
    <text evidence="1">Heterodimer composed of CysD, the smaller subunit, and CysN.</text>
</comment>
<comment type="similarity">
    <text evidence="1">Belongs to the PAPS reductase family. CysD subfamily.</text>
</comment>
<protein>
    <recommendedName>
        <fullName evidence="1">Sulfate adenylyltransferase subunit 2</fullName>
        <ecNumber evidence="1">2.7.7.4</ecNumber>
    </recommendedName>
    <alternativeName>
        <fullName evidence="1">ATP-sulfurylase small subunit</fullName>
    </alternativeName>
    <alternativeName>
        <fullName evidence="1">Sulfate adenylate transferase</fullName>
        <shortName evidence="1">SAT</shortName>
    </alternativeName>
</protein>
<accession>B5FGJ8</accession>
<organism>
    <name type="scientific">Aliivibrio fischeri (strain MJ11)</name>
    <name type="common">Vibrio fischeri</name>
    <dbReference type="NCBI Taxonomy" id="388396"/>
    <lineage>
        <taxon>Bacteria</taxon>
        <taxon>Pseudomonadati</taxon>
        <taxon>Pseudomonadota</taxon>
        <taxon>Gammaproteobacteria</taxon>
        <taxon>Vibrionales</taxon>
        <taxon>Vibrionaceae</taxon>
        <taxon>Aliivibrio</taxon>
    </lineage>
</organism>
<keyword id="KW-0067">ATP-binding</keyword>
<keyword id="KW-0547">Nucleotide-binding</keyword>
<keyword id="KW-0548">Nucleotidyltransferase</keyword>
<keyword id="KW-0808">Transferase</keyword>
<proteinExistence type="inferred from homology"/>
<dbReference type="EC" id="2.7.7.4" evidence="1"/>
<dbReference type="EMBL" id="CP001139">
    <property type="protein sequence ID" value="ACH65175.1"/>
    <property type="molecule type" value="Genomic_DNA"/>
</dbReference>
<dbReference type="RefSeq" id="WP_005417374.1">
    <property type="nucleotide sequence ID" value="NC_011184.1"/>
</dbReference>
<dbReference type="SMR" id="B5FGJ8"/>
<dbReference type="GeneID" id="54162939"/>
<dbReference type="KEGG" id="vfm:VFMJ11_0307"/>
<dbReference type="HOGENOM" id="CLU_043026_0_0_6"/>
<dbReference type="UniPathway" id="UPA00140">
    <property type="reaction ID" value="UER00204"/>
</dbReference>
<dbReference type="Proteomes" id="UP000001857">
    <property type="component" value="Chromosome I"/>
</dbReference>
<dbReference type="GO" id="GO:0005524">
    <property type="term" value="F:ATP binding"/>
    <property type="evidence" value="ECO:0007669"/>
    <property type="project" value="UniProtKB-KW"/>
</dbReference>
<dbReference type="GO" id="GO:0004781">
    <property type="term" value="F:sulfate adenylyltransferase (ATP) activity"/>
    <property type="evidence" value="ECO:0007669"/>
    <property type="project" value="UniProtKB-UniRule"/>
</dbReference>
<dbReference type="GO" id="GO:0070814">
    <property type="term" value="P:hydrogen sulfide biosynthetic process"/>
    <property type="evidence" value="ECO:0007669"/>
    <property type="project" value="UniProtKB-UniRule"/>
</dbReference>
<dbReference type="GO" id="GO:0000103">
    <property type="term" value="P:sulfate assimilation"/>
    <property type="evidence" value="ECO:0007669"/>
    <property type="project" value="UniProtKB-UniRule"/>
</dbReference>
<dbReference type="CDD" id="cd23946">
    <property type="entry name" value="Sulfate_adenylyltransferase_2"/>
    <property type="match status" value="1"/>
</dbReference>
<dbReference type="FunFam" id="3.40.50.620:FF:000002">
    <property type="entry name" value="Sulfate adenylyltransferase subunit 2"/>
    <property type="match status" value="1"/>
</dbReference>
<dbReference type="Gene3D" id="3.40.50.620">
    <property type="entry name" value="HUPs"/>
    <property type="match status" value="1"/>
</dbReference>
<dbReference type="HAMAP" id="MF_00064">
    <property type="entry name" value="Sulf_adenylyltr_sub2"/>
    <property type="match status" value="1"/>
</dbReference>
<dbReference type="InterPro" id="IPR002500">
    <property type="entry name" value="PAPS_reduct_dom"/>
</dbReference>
<dbReference type="InterPro" id="IPR014729">
    <property type="entry name" value="Rossmann-like_a/b/a_fold"/>
</dbReference>
<dbReference type="InterPro" id="IPR011784">
    <property type="entry name" value="SO4_adenylTrfase_ssu"/>
</dbReference>
<dbReference type="InterPro" id="IPR050128">
    <property type="entry name" value="Sulfate_adenylyltrnsfr_sub2"/>
</dbReference>
<dbReference type="NCBIfam" id="TIGR02039">
    <property type="entry name" value="CysD"/>
    <property type="match status" value="1"/>
</dbReference>
<dbReference type="NCBIfam" id="NF003587">
    <property type="entry name" value="PRK05253.1"/>
    <property type="match status" value="1"/>
</dbReference>
<dbReference type="NCBIfam" id="NF009214">
    <property type="entry name" value="PRK12563.1"/>
    <property type="match status" value="1"/>
</dbReference>
<dbReference type="PANTHER" id="PTHR43196">
    <property type="entry name" value="SULFATE ADENYLYLTRANSFERASE SUBUNIT 2"/>
    <property type="match status" value="1"/>
</dbReference>
<dbReference type="PANTHER" id="PTHR43196:SF1">
    <property type="entry name" value="SULFATE ADENYLYLTRANSFERASE SUBUNIT 2"/>
    <property type="match status" value="1"/>
</dbReference>
<dbReference type="Pfam" id="PF01507">
    <property type="entry name" value="PAPS_reduct"/>
    <property type="match status" value="1"/>
</dbReference>
<dbReference type="PIRSF" id="PIRSF002936">
    <property type="entry name" value="CysDAde_trans"/>
    <property type="match status" value="1"/>
</dbReference>
<dbReference type="SUPFAM" id="SSF52402">
    <property type="entry name" value="Adenine nucleotide alpha hydrolases-like"/>
    <property type="match status" value="1"/>
</dbReference>
<evidence type="ECO:0000255" key="1">
    <source>
        <dbReference type="HAMAP-Rule" id="MF_00064"/>
    </source>
</evidence>
<evidence type="ECO:0000256" key="2">
    <source>
        <dbReference type="SAM" id="MobiDB-lite"/>
    </source>
</evidence>
<name>CYSD_ALIFM</name>
<gene>
    <name evidence="1" type="primary">cysD</name>
    <name type="ordered locus">VFMJ11_0307</name>
</gene>
<sequence length="302" mass="35086">MDAKRLTHLQQLEAESIHIIREVAAEFDNPVMMYSIGKDSSVMLHLARKAFYPGKIPFPLLHVDTDWKFKEMIEFRDKTAEKYGFDLLVHKNPEGLEMGINPFVHGSSKHTDIMKTQGLKQALNKYGFDAAFGGARRDEEKSRAKERVYSFRDKNHTWDPKNQRPELWNTYNGQVNKGESIRVFPLSNWTELDIWQYIYLENIEIVPLYLSEKRPVVERDGMLIMVDDERLKLEEGEEIQHKDIRFRTLGCYPLTGAVESKANTLPEIIEEMLVATSSERQGRAIDHDSSGSMELKKRQGYF</sequence>
<reference key="1">
    <citation type="submission" date="2008-08" db="EMBL/GenBank/DDBJ databases">
        <title>Complete sequence of Vibrio fischeri strain MJ11.</title>
        <authorList>
            <person name="Mandel M.J."/>
            <person name="Stabb E.V."/>
            <person name="Ruby E.G."/>
            <person name="Ferriera S."/>
            <person name="Johnson J."/>
            <person name="Kravitz S."/>
            <person name="Beeson K."/>
            <person name="Sutton G."/>
            <person name="Rogers Y.-H."/>
            <person name="Friedman R."/>
            <person name="Frazier M."/>
            <person name="Venter J.C."/>
        </authorList>
    </citation>
    <scope>NUCLEOTIDE SEQUENCE [LARGE SCALE GENOMIC DNA]</scope>
    <source>
        <strain>MJ11</strain>
    </source>
</reference>